<comment type="function">
    <text evidence="1">Acts as a component of the Sec62/63 complex which is involved in SRP-independent post-translational translocation across the endoplasmic reticulum (ER) and functions together with the Sec61 complex and bip1 in a channel-forming translocon complex. A cycle of assembly and disassembly of Sec62/63 complex from sec61 may govern the activity of the translocon. sec63 may affect sec61-polypeptide interactions by increasing the affinity of targeting pathways for sec61 and/or by modifying sec61 to allow more efficient polypeptide interaction. May also be involved in SRP-dependent cotranslational translocation (By similarity).</text>
</comment>
<comment type="subunit">
    <text evidence="1">Component of the heterotetrameric Sec62/63complex composed of sec62, sec63, sec66 and sec72. The Sec62/63 complex associates with the Sec61 complex to form the Sec complex. May physically associate with bip1 in the endoplasmic reticulum and this interaction may be regulated by ATP hydrolysis (By similarity).</text>
</comment>
<comment type="subcellular location">
    <subcellularLocation>
        <location evidence="6">Endoplasmic reticulum membrane</location>
        <topology evidence="6">Multi-pass membrane protein</topology>
    </subcellularLocation>
    <subcellularLocation>
        <location evidence="1">Nucleus membrane</location>
        <topology evidence="1">Multi-pass membrane protein</topology>
    </subcellularLocation>
    <subcellularLocation>
        <location evidence="1">Nucleus inner membrane</location>
        <topology evidence="1">Multi-pass membrane protein</topology>
    </subcellularLocation>
</comment>
<evidence type="ECO:0000250" key="1"/>
<evidence type="ECO:0000255" key="2"/>
<evidence type="ECO:0000255" key="3">
    <source>
        <dbReference type="PROSITE-ProRule" id="PRU00286"/>
    </source>
</evidence>
<evidence type="ECO:0000256" key="4">
    <source>
        <dbReference type="SAM" id="MobiDB-lite"/>
    </source>
</evidence>
<evidence type="ECO:0000269" key="5">
    <source>
    </source>
</evidence>
<evidence type="ECO:0000305" key="6"/>
<reference key="1">
    <citation type="journal article" date="2002" name="Nature">
        <title>The genome sequence of Schizosaccharomyces pombe.</title>
        <authorList>
            <person name="Wood V."/>
            <person name="Gwilliam R."/>
            <person name="Rajandream M.A."/>
            <person name="Lyne M.H."/>
            <person name="Lyne R."/>
            <person name="Stewart A."/>
            <person name="Sgouros J.G."/>
            <person name="Peat N."/>
            <person name="Hayles J."/>
            <person name="Baker S.G."/>
            <person name="Basham D."/>
            <person name="Bowman S."/>
            <person name="Brooks K."/>
            <person name="Brown D."/>
            <person name="Brown S."/>
            <person name="Chillingworth T."/>
            <person name="Churcher C.M."/>
            <person name="Collins M."/>
            <person name="Connor R."/>
            <person name="Cronin A."/>
            <person name="Davis P."/>
            <person name="Feltwell T."/>
            <person name="Fraser A."/>
            <person name="Gentles S."/>
            <person name="Goble A."/>
            <person name="Hamlin N."/>
            <person name="Harris D.E."/>
            <person name="Hidalgo J."/>
            <person name="Hodgson G."/>
            <person name="Holroyd S."/>
            <person name="Hornsby T."/>
            <person name="Howarth S."/>
            <person name="Huckle E.J."/>
            <person name="Hunt S."/>
            <person name="Jagels K."/>
            <person name="James K.D."/>
            <person name="Jones L."/>
            <person name="Jones M."/>
            <person name="Leather S."/>
            <person name="McDonald S."/>
            <person name="McLean J."/>
            <person name="Mooney P."/>
            <person name="Moule S."/>
            <person name="Mungall K.L."/>
            <person name="Murphy L.D."/>
            <person name="Niblett D."/>
            <person name="Odell C."/>
            <person name="Oliver K."/>
            <person name="O'Neil S."/>
            <person name="Pearson D."/>
            <person name="Quail M.A."/>
            <person name="Rabbinowitsch E."/>
            <person name="Rutherford K.M."/>
            <person name="Rutter S."/>
            <person name="Saunders D."/>
            <person name="Seeger K."/>
            <person name="Sharp S."/>
            <person name="Skelton J."/>
            <person name="Simmonds M.N."/>
            <person name="Squares R."/>
            <person name="Squares S."/>
            <person name="Stevens K."/>
            <person name="Taylor K."/>
            <person name="Taylor R.G."/>
            <person name="Tivey A."/>
            <person name="Walsh S.V."/>
            <person name="Warren T."/>
            <person name="Whitehead S."/>
            <person name="Woodward J.R."/>
            <person name="Volckaert G."/>
            <person name="Aert R."/>
            <person name="Robben J."/>
            <person name="Grymonprez B."/>
            <person name="Weltjens I."/>
            <person name="Vanstreels E."/>
            <person name="Rieger M."/>
            <person name="Schaefer M."/>
            <person name="Mueller-Auer S."/>
            <person name="Gabel C."/>
            <person name="Fuchs M."/>
            <person name="Duesterhoeft A."/>
            <person name="Fritzc C."/>
            <person name="Holzer E."/>
            <person name="Moestl D."/>
            <person name="Hilbert H."/>
            <person name="Borzym K."/>
            <person name="Langer I."/>
            <person name="Beck A."/>
            <person name="Lehrach H."/>
            <person name="Reinhardt R."/>
            <person name="Pohl T.M."/>
            <person name="Eger P."/>
            <person name="Zimmermann W."/>
            <person name="Wedler H."/>
            <person name="Wambutt R."/>
            <person name="Purnelle B."/>
            <person name="Goffeau A."/>
            <person name="Cadieu E."/>
            <person name="Dreano S."/>
            <person name="Gloux S."/>
            <person name="Lelaure V."/>
            <person name="Mottier S."/>
            <person name="Galibert F."/>
            <person name="Aves S.J."/>
            <person name="Xiang Z."/>
            <person name="Hunt C."/>
            <person name="Moore K."/>
            <person name="Hurst S.M."/>
            <person name="Lucas M."/>
            <person name="Rochet M."/>
            <person name="Gaillardin C."/>
            <person name="Tallada V.A."/>
            <person name="Garzon A."/>
            <person name="Thode G."/>
            <person name="Daga R.R."/>
            <person name="Cruzado L."/>
            <person name="Jimenez J."/>
            <person name="Sanchez M."/>
            <person name="del Rey F."/>
            <person name="Benito J."/>
            <person name="Dominguez A."/>
            <person name="Revuelta J.L."/>
            <person name="Moreno S."/>
            <person name="Armstrong J."/>
            <person name="Forsburg S.L."/>
            <person name="Cerutti L."/>
            <person name="Lowe T."/>
            <person name="McCombie W.R."/>
            <person name="Paulsen I."/>
            <person name="Potashkin J."/>
            <person name="Shpakovski G.V."/>
            <person name="Ussery D."/>
            <person name="Barrell B.G."/>
            <person name="Nurse P."/>
        </authorList>
    </citation>
    <scope>NUCLEOTIDE SEQUENCE [LARGE SCALE GENOMIC DNA]</scope>
    <source>
        <strain>972 / ATCC 24843</strain>
    </source>
</reference>
<reference key="2">
    <citation type="journal article" date="2006" name="Nat. Biotechnol.">
        <title>ORFeome cloning and global analysis of protein localization in the fission yeast Schizosaccharomyces pombe.</title>
        <authorList>
            <person name="Matsuyama A."/>
            <person name="Arai R."/>
            <person name="Yashiroda Y."/>
            <person name="Shirai A."/>
            <person name="Kamata A."/>
            <person name="Sekido S."/>
            <person name="Kobayashi Y."/>
            <person name="Hashimoto A."/>
            <person name="Hamamoto M."/>
            <person name="Hiraoka Y."/>
            <person name="Horinouchi S."/>
            <person name="Yoshida M."/>
        </authorList>
    </citation>
    <scope>SUBCELLULAR LOCATION [LARGE SCALE ANALYSIS]</scope>
</reference>
<reference key="3">
    <citation type="journal article" date="2008" name="J. Proteome Res.">
        <title>Phosphoproteome analysis of fission yeast.</title>
        <authorList>
            <person name="Wilson-Grady J.T."/>
            <person name="Villen J."/>
            <person name="Gygi S.P."/>
        </authorList>
    </citation>
    <scope>PHOSPHORYLATION [LARGE SCALE ANALYSIS] AT SER-566 AND SER-572</scope>
    <scope>IDENTIFICATION BY MASS SPECTROMETRY</scope>
</reference>
<keyword id="KW-0143">Chaperone</keyword>
<keyword id="KW-0256">Endoplasmic reticulum</keyword>
<keyword id="KW-0472">Membrane</keyword>
<keyword id="KW-0539">Nucleus</keyword>
<keyword id="KW-0597">Phosphoprotein</keyword>
<keyword id="KW-0653">Protein transport</keyword>
<keyword id="KW-1185">Reference proteome</keyword>
<keyword id="KW-0812">Transmembrane</keyword>
<keyword id="KW-1133">Transmembrane helix</keyword>
<keyword id="KW-0813">Transport</keyword>
<name>SEC63_SCHPO</name>
<proteinExistence type="evidence at protein level"/>
<organism>
    <name type="scientific">Schizosaccharomyces pombe (strain 972 / ATCC 24843)</name>
    <name type="common">Fission yeast</name>
    <dbReference type="NCBI Taxonomy" id="284812"/>
    <lineage>
        <taxon>Eukaryota</taxon>
        <taxon>Fungi</taxon>
        <taxon>Dikarya</taxon>
        <taxon>Ascomycota</taxon>
        <taxon>Taphrinomycotina</taxon>
        <taxon>Schizosaccharomycetes</taxon>
        <taxon>Schizosaccharomycetales</taxon>
        <taxon>Schizosaccharomycetaceae</taxon>
        <taxon>Schizosaccharomyces</taxon>
    </lineage>
</organism>
<gene>
    <name type="primary">sec63</name>
    <name type="ORF">SPBC36B7.03</name>
</gene>
<sequence>MSSEYKYDEQGIFFPVFLLVGTSCCVLPLTYSTILGPSASKEKKNVRDPFQKYRPKDLKVQRKSIFRLRYIFLILGWLAIGFLSYKIANSRLKLNIWDPYEILGIAKGTSVDDVRRHYKRLSIKFHPDKVRNMVNTTREEVEKHYIEITNAYRALTDDKTRENYALYGTPDVPQHISVGIALPKWISESENSIYILGFYGLVFGIVLPYAVGKWWYGSRTYTRDHVHVDTVDEWFPKMETSLTLDELLSLFASSKELTSLVPNEKNPKEYILKLLFDHLNRKKTNNFNTHQILSQSDVVLNALLSVATAFGFANPVDNVLKLWQHIVQAIPLDAPFPLLQLPHLLMEDVKNLSIRNISSIPQFLSLSEEQTKDYLPNYSKNQLKEMREIANGIPRISVVAAKVLVDDDEYITVGAIANLILDLKCSYGTEVVPEVSTDGTETATKKDEEDAEKYHQSKDVVLGDVETLPYAWAPYFTQHHKTAWWIYVVDPRQNRVIVPPFSITDIPKTLRTFRIPFQVPPVAGTFSFQLHIMSNSYVGEDVISNLTMIVKDTSVLQEQLQEEAVSDLEDNSDIDESANAGKDFSDDENIGSDEEDESEYDPMDTDTSDGE</sequence>
<accession>Q9HGN7</accession>
<dbReference type="EMBL" id="CU329671">
    <property type="protein sequence ID" value="CAC05724.1"/>
    <property type="molecule type" value="Genomic_DNA"/>
</dbReference>
<dbReference type="RefSeq" id="NP_595985.1">
    <property type="nucleotide sequence ID" value="NM_001021892.2"/>
</dbReference>
<dbReference type="SMR" id="Q9HGN7"/>
<dbReference type="BioGRID" id="277477">
    <property type="interactions" value="25"/>
</dbReference>
<dbReference type="FunCoup" id="Q9HGN7">
    <property type="interactions" value="640"/>
</dbReference>
<dbReference type="STRING" id="284812.Q9HGN7"/>
<dbReference type="iPTMnet" id="Q9HGN7"/>
<dbReference type="PaxDb" id="4896-SPBC36B7.03.1"/>
<dbReference type="EnsemblFungi" id="SPBC36B7.03.1">
    <property type="protein sequence ID" value="SPBC36B7.03.1:pep"/>
    <property type="gene ID" value="SPBC36B7.03"/>
</dbReference>
<dbReference type="GeneID" id="2540961"/>
<dbReference type="KEGG" id="spo:2540961"/>
<dbReference type="PomBase" id="SPBC36B7.03">
    <property type="gene designation" value="sec63"/>
</dbReference>
<dbReference type="VEuPathDB" id="FungiDB:SPBC36B7.03"/>
<dbReference type="eggNOG" id="KOG0721">
    <property type="taxonomic scope" value="Eukaryota"/>
</dbReference>
<dbReference type="HOGENOM" id="CLU_014210_0_0_1"/>
<dbReference type="InParanoid" id="Q9HGN7"/>
<dbReference type="OMA" id="RAILHAH"/>
<dbReference type="PhylomeDB" id="Q9HGN7"/>
<dbReference type="PRO" id="PR:Q9HGN7"/>
<dbReference type="Proteomes" id="UP000002485">
    <property type="component" value="Chromosome II"/>
</dbReference>
<dbReference type="GO" id="GO:0032541">
    <property type="term" value="C:cortical endoplasmic reticulum"/>
    <property type="evidence" value="ECO:0000314"/>
    <property type="project" value="PomBase"/>
</dbReference>
<dbReference type="GO" id="GO:0005783">
    <property type="term" value="C:endoplasmic reticulum"/>
    <property type="evidence" value="ECO:0007005"/>
    <property type="project" value="PomBase"/>
</dbReference>
<dbReference type="GO" id="GO:0005637">
    <property type="term" value="C:nuclear inner membrane"/>
    <property type="evidence" value="ECO:0007669"/>
    <property type="project" value="UniProtKB-SubCell"/>
</dbReference>
<dbReference type="GO" id="GO:0042175">
    <property type="term" value="C:nuclear outer membrane-endoplasmic reticulum membrane network"/>
    <property type="evidence" value="ECO:0000314"/>
    <property type="project" value="PomBase"/>
</dbReference>
<dbReference type="GO" id="GO:0031207">
    <property type="term" value="C:Sec62/Sec63 complex"/>
    <property type="evidence" value="ECO:0000318"/>
    <property type="project" value="GO_Central"/>
</dbReference>
<dbReference type="GO" id="GO:0030544">
    <property type="term" value="F:Hsp70 protein binding"/>
    <property type="evidence" value="ECO:0000255"/>
    <property type="project" value="PomBase"/>
</dbReference>
<dbReference type="GO" id="GO:0008320">
    <property type="term" value="F:protein transmembrane transporter activity"/>
    <property type="evidence" value="ECO:0000318"/>
    <property type="project" value="GO_Central"/>
</dbReference>
<dbReference type="GO" id="GO:0006620">
    <property type="term" value="P:post-translational protein targeting to endoplasmic reticulum membrane"/>
    <property type="evidence" value="ECO:0000318"/>
    <property type="project" value="GO_Central"/>
</dbReference>
<dbReference type="GO" id="GO:0006614">
    <property type="term" value="P:SRP-dependent cotranslational protein targeting to membrane"/>
    <property type="evidence" value="ECO:0000318"/>
    <property type="project" value="GO_Central"/>
</dbReference>
<dbReference type="CDD" id="cd06257">
    <property type="entry name" value="DnaJ"/>
    <property type="match status" value="1"/>
</dbReference>
<dbReference type="FunFam" id="1.10.287.110:FF:000039">
    <property type="entry name" value="Protein translocation complex component (Npl1)"/>
    <property type="match status" value="1"/>
</dbReference>
<dbReference type="FunFam" id="2.60.40.150:FF:000525">
    <property type="entry name" value="Translocation protein sec63"/>
    <property type="match status" value="1"/>
</dbReference>
<dbReference type="Gene3D" id="1.10.150.20">
    <property type="entry name" value="5' to 3' exonuclease, C-terminal subdomain"/>
    <property type="match status" value="1"/>
</dbReference>
<dbReference type="Gene3D" id="2.60.40.150">
    <property type="entry name" value="C2 domain"/>
    <property type="match status" value="1"/>
</dbReference>
<dbReference type="Gene3D" id="1.10.287.110">
    <property type="entry name" value="DnaJ domain"/>
    <property type="match status" value="1"/>
</dbReference>
<dbReference type="InterPro" id="IPR035892">
    <property type="entry name" value="C2_domain_sf"/>
</dbReference>
<dbReference type="InterPro" id="IPR001623">
    <property type="entry name" value="DnaJ_domain"/>
</dbReference>
<dbReference type="InterPro" id="IPR014756">
    <property type="entry name" value="Ig_E-set"/>
</dbReference>
<dbReference type="InterPro" id="IPR036869">
    <property type="entry name" value="J_dom_sf"/>
</dbReference>
<dbReference type="InterPro" id="IPR004179">
    <property type="entry name" value="Sec63-dom"/>
</dbReference>
<dbReference type="PANTHER" id="PTHR24075">
    <property type="entry name" value="SEC63 DOMAIN-CONTAINING"/>
    <property type="match status" value="1"/>
</dbReference>
<dbReference type="PANTHER" id="PTHR24075:SF0">
    <property type="entry name" value="TRANSLOCATION PROTEIN SEC63 HOMOLOG"/>
    <property type="match status" value="1"/>
</dbReference>
<dbReference type="Pfam" id="PF00226">
    <property type="entry name" value="DnaJ"/>
    <property type="match status" value="1"/>
</dbReference>
<dbReference type="Pfam" id="PF02889">
    <property type="entry name" value="Sec63"/>
    <property type="match status" value="1"/>
</dbReference>
<dbReference type="PRINTS" id="PR00625">
    <property type="entry name" value="JDOMAIN"/>
</dbReference>
<dbReference type="SMART" id="SM00271">
    <property type="entry name" value="DnaJ"/>
    <property type="match status" value="1"/>
</dbReference>
<dbReference type="SMART" id="SM00973">
    <property type="entry name" value="Sec63"/>
    <property type="match status" value="1"/>
</dbReference>
<dbReference type="SUPFAM" id="SSF46565">
    <property type="entry name" value="Chaperone J-domain"/>
    <property type="match status" value="1"/>
</dbReference>
<dbReference type="SUPFAM" id="SSF81296">
    <property type="entry name" value="E set domains"/>
    <property type="match status" value="1"/>
</dbReference>
<dbReference type="SUPFAM" id="SSF158702">
    <property type="entry name" value="Sec63 N-terminal domain-like"/>
    <property type="match status" value="1"/>
</dbReference>
<dbReference type="PROSITE" id="PS50076">
    <property type="entry name" value="DNAJ_2"/>
    <property type="match status" value="1"/>
</dbReference>
<protein>
    <recommendedName>
        <fullName>Translocation protein sec63</fullName>
    </recommendedName>
</protein>
<feature type="chain" id="PRO_0000311762" description="Translocation protein sec63">
    <location>
        <begin position="1"/>
        <end position="611"/>
    </location>
</feature>
<feature type="topological domain" description="Lumenal" evidence="1">
    <location>
        <begin position="1"/>
        <end position="10"/>
    </location>
</feature>
<feature type="transmembrane region" description="Helical" evidence="2">
    <location>
        <begin position="11"/>
        <end position="31"/>
    </location>
</feature>
<feature type="topological domain" description="Cytoplasmic" evidence="1">
    <location>
        <begin position="32"/>
        <end position="69"/>
    </location>
</feature>
<feature type="transmembrane region" description="Helical" evidence="2">
    <location>
        <begin position="70"/>
        <end position="90"/>
    </location>
</feature>
<feature type="topological domain" description="Lumenal" evidence="1">
    <location>
        <begin position="91"/>
        <end position="191"/>
    </location>
</feature>
<feature type="transmembrane region" description="Helical" evidence="2">
    <location>
        <begin position="192"/>
        <end position="212"/>
    </location>
</feature>
<feature type="topological domain" description="Cytoplasmic" evidence="1">
    <location>
        <begin position="213"/>
        <end position="611"/>
    </location>
</feature>
<feature type="domain" description="J" evidence="3">
    <location>
        <begin position="98"/>
        <end position="168"/>
    </location>
</feature>
<feature type="domain" description="SEC63">
    <location>
        <begin position="200"/>
        <end position="503"/>
    </location>
</feature>
<feature type="region of interest" description="Disordered" evidence="4">
    <location>
        <begin position="563"/>
        <end position="611"/>
    </location>
</feature>
<feature type="compositionally biased region" description="Acidic residues" evidence="4">
    <location>
        <begin position="563"/>
        <end position="576"/>
    </location>
</feature>
<feature type="compositionally biased region" description="Acidic residues" evidence="4">
    <location>
        <begin position="585"/>
        <end position="611"/>
    </location>
</feature>
<feature type="modified residue" description="Phosphoserine" evidence="5">
    <location>
        <position position="566"/>
    </location>
</feature>
<feature type="modified residue" description="Phosphoserine" evidence="5">
    <location>
        <position position="572"/>
    </location>
</feature>